<evidence type="ECO:0000255" key="1">
    <source>
        <dbReference type="HAMAP-Rule" id="MF_00087"/>
    </source>
</evidence>
<keyword id="KW-0521">NADP</keyword>
<keyword id="KW-0560">Oxidoreductase</keyword>
<keyword id="KW-0627">Porphyrin biosynthesis</keyword>
<accession>C1AZ44</accession>
<comment type="function">
    <text evidence="1">Catalyzes the NADPH-dependent reduction of glutamyl-tRNA(Glu) to glutamate 1-semialdehyde (GSA).</text>
</comment>
<comment type="catalytic activity">
    <reaction evidence="1">
        <text>(S)-4-amino-5-oxopentanoate + tRNA(Glu) + NADP(+) = L-glutamyl-tRNA(Glu) + NADPH + H(+)</text>
        <dbReference type="Rhea" id="RHEA:12344"/>
        <dbReference type="Rhea" id="RHEA-COMP:9663"/>
        <dbReference type="Rhea" id="RHEA-COMP:9680"/>
        <dbReference type="ChEBI" id="CHEBI:15378"/>
        <dbReference type="ChEBI" id="CHEBI:57501"/>
        <dbReference type="ChEBI" id="CHEBI:57783"/>
        <dbReference type="ChEBI" id="CHEBI:58349"/>
        <dbReference type="ChEBI" id="CHEBI:78442"/>
        <dbReference type="ChEBI" id="CHEBI:78520"/>
        <dbReference type="EC" id="1.2.1.70"/>
    </reaction>
</comment>
<comment type="pathway">
    <text evidence="1">Porphyrin-containing compound metabolism; protoporphyrin-IX biosynthesis; 5-aminolevulinate from L-glutamyl-tRNA(Glu): step 1/2.</text>
</comment>
<comment type="subunit">
    <text evidence="1">Homodimer.</text>
</comment>
<comment type="domain">
    <text evidence="1">Possesses an unusual extended V-shaped dimeric structure with each monomer consisting of three distinct domains arranged along a curved 'spinal' alpha-helix. The N-terminal catalytic domain specifically recognizes the glutamate moiety of the substrate. The second domain is the NADPH-binding domain, and the third C-terminal domain is responsible for dimerization.</text>
</comment>
<comment type="miscellaneous">
    <text evidence="1">During catalysis, the active site Cys acts as a nucleophile attacking the alpha-carbonyl group of tRNA-bound glutamate with the formation of a thioester intermediate between enzyme and glutamate, and the concomitant release of tRNA(Glu). The thioester intermediate is finally reduced by direct hydride transfer from NADPH, to form the product GSA.</text>
</comment>
<comment type="similarity">
    <text evidence="1">Belongs to the glutamyl-tRNA reductase family.</text>
</comment>
<dbReference type="EC" id="1.2.1.70" evidence="1"/>
<dbReference type="EMBL" id="AP011115">
    <property type="protein sequence ID" value="BAH49972.1"/>
    <property type="molecule type" value="Genomic_DNA"/>
</dbReference>
<dbReference type="RefSeq" id="WP_012688933.1">
    <property type="nucleotide sequence ID" value="NC_012522.1"/>
</dbReference>
<dbReference type="SMR" id="C1AZ44"/>
<dbReference type="STRING" id="632772.ROP_17250"/>
<dbReference type="KEGG" id="rop:ROP_17250"/>
<dbReference type="PATRIC" id="fig|632772.20.peg.1808"/>
<dbReference type="HOGENOM" id="CLU_035113_4_0_11"/>
<dbReference type="OrthoDB" id="110209at2"/>
<dbReference type="UniPathway" id="UPA00251">
    <property type="reaction ID" value="UER00316"/>
</dbReference>
<dbReference type="Proteomes" id="UP000002212">
    <property type="component" value="Chromosome"/>
</dbReference>
<dbReference type="GO" id="GO:0008883">
    <property type="term" value="F:glutamyl-tRNA reductase activity"/>
    <property type="evidence" value="ECO:0007669"/>
    <property type="project" value="UniProtKB-UniRule"/>
</dbReference>
<dbReference type="GO" id="GO:0050661">
    <property type="term" value="F:NADP binding"/>
    <property type="evidence" value="ECO:0007669"/>
    <property type="project" value="InterPro"/>
</dbReference>
<dbReference type="GO" id="GO:0019353">
    <property type="term" value="P:protoporphyrinogen IX biosynthetic process from glutamate"/>
    <property type="evidence" value="ECO:0007669"/>
    <property type="project" value="TreeGrafter"/>
</dbReference>
<dbReference type="CDD" id="cd05213">
    <property type="entry name" value="NAD_bind_Glutamyl_tRNA_reduct"/>
    <property type="match status" value="1"/>
</dbReference>
<dbReference type="FunFam" id="3.30.460.30:FF:000001">
    <property type="entry name" value="Glutamyl-tRNA reductase"/>
    <property type="match status" value="1"/>
</dbReference>
<dbReference type="Gene3D" id="3.30.460.30">
    <property type="entry name" value="Glutamyl-tRNA reductase, N-terminal domain"/>
    <property type="match status" value="1"/>
</dbReference>
<dbReference type="Gene3D" id="3.40.50.720">
    <property type="entry name" value="NAD(P)-binding Rossmann-like Domain"/>
    <property type="match status" value="1"/>
</dbReference>
<dbReference type="HAMAP" id="MF_00087">
    <property type="entry name" value="Glu_tRNA_reductase"/>
    <property type="match status" value="1"/>
</dbReference>
<dbReference type="InterPro" id="IPR000343">
    <property type="entry name" value="4pyrrol_synth_GluRdtase"/>
</dbReference>
<dbReference type="InterPro" id="IPR015896">
    <property type="entry name" value="4pyrrol_synth_GluRdtase_dimer"/>
</dbReference>
<dbReference type="InterPro" id="IPR015895">
    <property type="entry name" value="4pyrrol_synth_GluRdtase_N"/>
</dbReference>
<dbReference type="InterPro" id="IPR018214">
    <property type="entry name" value="GluRdtase_CS"/>
</dbReference>
<dbReference type="InterPro" id="IPR036453">
    <property type="entry name" value="GluRdtase_dimer_dom_sf"/>
</dbReference>
<dbReference type="InterPro" id="IPR036343">
    <property type="entry name" value="GluRdtase_N_sf"/>
</dbReference>
<dbReference type="InterPro" id="IPR036291">
    <property type="entry name" value="NAD(P)-bd_dom_sf"/>
</dbReference>
<dbReference type="InterPro" id="IPR006151">
    <property type="entry name" value="Shikm_DH/Glu-tRNA_Rdtase"/>
</dbReference>
<dbReference type="NCBIfam" id="TIGR01035">
    <property type="entry name" value="hemA"/>
    <property type="match status" value="1"/>
</dbReference>
<dbReference type="NCBIfam" id="NF000744">
    <property type="entry name" value="PRK00045.1-3"/>
    <property type="match status" value="1"/>
</dbReference>
<dbReference type="PANTHER" id="PTHR43013">
    <property type="entry name" value="GLUTAMYL-TRNA REDUCTASE"/>
    <property type="match status" value="1"/>
</dbReference>
<dbReference type="PANTHER" id="PTHR43013:SF1">
    <property type="entry name" value="GLUTAMYL-TRNA REDUCTASE"/>
    <property type="match status" value="1"/>
</dbReference>
<dbReference type="Pfam" id="PF00745">
    <property type="entry name" value="GlutR_dimer"/>
    <property type="match status" value="1"/>
</dbReference>
<dbReference type="Pfam" id="PF05201">
    <property type="entry name" value="GlutR_N"/>
    <property type="match status" value="1"/>
</dbReference>
<dbReference type="Pfam" id="PF01488">
    <property type="entry name" value="Shikimate_DH"/>
    <property type="match status" value="1"/>
</dbReference>
<dbReference type="PIRSF" id="PIRSF000445">
    <property type="entry name" value="4pyrrol_synth_GluRdtase"/>
    <property type="match status" value="1"/>
</dbReference>
<dbReference type="SUPFAM" id="SSF69742">
    <property type="entry name" value="Glutamyl tRNA-reductase catalytic, N-terminal domain"/>
    <property type="match status" value="1"/>
</dbReference>
<dbReference type="SUPFAM" id="SSF69075">
    <property type="entry name" value="Glutamyl tRNA-reductase dimerization domain"/>
    <property type="match status" value="1"/>
</dbReference>
<dbReference type="SUPFAM" id="SSF51735">
    <property type="entry name" value="NAD(P)-binding Rossmann-fold domains"/>
    <property type="match status" value="1"/>
</dbReference>
<dbReference type="PROSITE" id="PS00747">
    <property type="entry name" value="GLUTR"/>
    <property type="match status" value="1"/>
</dbReference>
<name>HEM1_RHOOB</name>
<gene>
    <name evidence="1" type="primary">hemA</name>
    <name type="ordered locus">ROP_17250</name>
</gene>
<sequence length="478" mass="49790">MSVLLVGVSHRTAPVPVLERVAVTDTDRPKLTDKLLASSHISEAMIVSTCNRVEIYAVVDAFHGALAEVGELLADHSGLDLTDLHRHAYVRYSEAAAEHLFAVASGLDSMVIGEQQILGQIRTAYASSDAQQAAGRTLHELAQQALRVGKRVHSETGIDSAGASVVSVALDRAAGIVGAGGLTGRTAVVVGAGSMGGLSVAHLTRAGIGRIVVVNRTRERAEHLADTARSNGVAAEALELAELPDAMAQADVLVTCTGAVGAVVTLADTHRALAQPGRDSERPLVICDLGLPRDVEPAVSGLPGVTVLDMESLQRDPAAGAAASDADAARTIVAAELANYLAGQRLAEVTPTVTALRQRAADVVEAELMRLDSRLPGLDDPERDEVARTVRRVVDKLLHAPTVRVKQLASAPGGDSYAAALRELFELSPGSVEAVAKPTELGGADLGAIDITDGFIAGQDPRLRRFVADDNRGKESQA</sequence>
<feature type="chain" id="PRO_1000190538" description="Glutamyl-tRNA reductase">
    <location>
        <begin position="1"/>
        <end position="478"/>
    </location>
</feature>
<feature type="active site" description="Nucleophile" evidence="1">
    <location>
        <position position="50"/>
    </location>
</feature>
<feature type="binding site" evidence="1">
    <location>
        <begin position="49"/>
        <end position="52"/>
    </location>
    <ligand>
        <name>substrate</name>
    </ligand>
</feature>
<feature type="binding site" evidence="1">
    <location>
        <position position="109"/>
    </location>
    <ligand>
        <name>substrate</name>
    </ligand>
</feature>
<feature type="binding site" evidence="1">
    <location>
        <begin position="114"/>
        <end position="116"/>
    </location>
    <ligand>
        <name>substrate</name>
    </ligand>
</feature>
<feature type="binding site" evidence="1">
    <location>
        <position position="120"/>
    </location>
    <ligand>
        <name>substrate</name>
    </ligand>
</feature>
<feature type="binding site" evidence="1">
    <location>
        <begin position="191"/>
        <end position="196"/>
    </location>
    <ligand>
        <name>NADP(+)</name>
        <dbReference type="ChEBI" id="CHEBI:58349"/>
    </ligand>
</feature>
<feature type="site" description="Important for activity" evidence="1">
    <location>
        <position position="99"/>
    </location>
</feature>
<proteinExistence type="inferred from homology"/>
<protein>
    <recommendedName>
        <fullName evidence="1">Glutamyl-tRNA reductase</fullName>
        <shortName evidence="1">GluTR</shortName>
        <ecNumber evidence="1">1.2.1.70</ecNumber>
    </recommendedName>
</protein>
<reference key="1">
    <citation type="submission" date="2009-03" db="EMBL/GenBank/DDBJ databases">
        <title>Comparison of the complete genome sequences of Rhodococcus erythropolis PR4 and Rhodococcus opacus B4.</title>
        <authorList>
            <person name="Takarada H."/>
            <person name="Sekine M."/>
            <person name="Hosoyama A."/>
            <person name="Yamada R."/>
            <person name="Fujisawa T."/>
            <person name="Omata S."/>
            <person name="Shimizu A."/>
            <person name="Tsukatani N."/>
            <person name="Tanikawa S."/>
            <person name="Fujita N."/>
            <person name="Harayama S."/>
        </authorList>
    </citation>
    <scope>NUCLEOTIDE SEQUENCE [LARGE SCALE GENOMIC DNA]</scope>
    <source>
        <strain>B4</strain>
    </source>
</reference>
<organism>
    <name type="scientific">Rhodococcus opacus (strain B4)</name>
    <dbReference type="NCBI Taxonomy" id="632772"/>
    <lineage>
        <taxon>Bacteria</taxon>
        <taxon>Bacillati</taxon>
        <taxon>Actinomycetota</taxon>
        <taxon>Actinomycetes</taxon>
        <taxon>Mycobacteriales</taxon>
        <taxon>Nocardiaceae</taxon>
        <taxon>Rhodococcus</taxon>
    </lineage>
</organism>